<keyword id="KW-0028">Amino-acid biosynthesis</keyword>
<keyword id="KW-0963">Cytoplasm</keyword>
<keyword id="KW-0521">NADP</keyword>
<keyword id="KW-0560">Oxidoreductase</keyword>
<keyword id="KW-0641">Proline biosynthesis</keyword>
<sequence length="435" mass="46360">MTTVPEPSAELLQRAGAVRLAAVDLGQTDDQQRADALQAMADALAERAEVIVAANREDLERSAAEGLAPALMARLKLDAGKLRGAIDGVRKLASLPDPLGRRQLHRELDQGLVLERISVPLGVVGVIFEARPDAVVQIASLAIRSGNGAMLKGGSEARCTNEAVMEALKLGLGRSAVAPDALTLLTTRQESLALLRLDGLVDLIIPRGSNELVRFIQDNTRIPVLGHADGICHLYVDAAADVDQAVRIAIDSKTQYPAACNAIETLLVHASIAPAFLASAVPAFQAAGVTLRGDEHSRQHGISDAATDEDWRTEYLDMILAVRVVPSMDAALEHIRRHGSRHTEAIATTDDQAAERFLGAVDSAGVYLNCSTRFADGFRYGFGAEVGISTQTLPPRGPVGLDGLVTYRYRLRGDGHIAADFADGTRSFTHTDLPL</sequence>
<feature type="chain" id="PRO_0000189800" description="Gamma-glutamyl phosphate reductase">
    <location>
        <begin position="1"/>
        <end position="435"/>
    </location>
</feature>
<name>PROA_PARMW</name>
<reference key="1">
    <citation type="journal article" date="2003" name="Nature">
        <title>The genome of a motile marine Synechococcus.</title>
        <authorList>
            <person name="Palenik B."/>
            <person name="Brahamsha B."/>
            <person name="Larimer F.W."/>
            <person name="Land M.L."/>
            <person name="Hauser L."/>
            <person name="Chain P."/>
            <person name="Lamerdin J.E."/>
            <person name="Regala W."/>
            <person name="Allen E.E."/>
            <person name="McCarren J."/>
            <person name="Paulsen I.T."/>
            <person name="Dufresne A."/>
            <person name="Partensky F."/>
            <person name="Webb E.A."/>
            <person name="Waterbury J."/>
        </authorList>
    </citation>
    <scope>NUCLEOTIDE SEQUENCE [LARGE SCALE GENOMIC DNA]</scope>
    <source>
        <strain>WH8102</strain>
    </source>
</reference>
<comment type="function">
    <text evidence="1">Catalyzes the NADPH-dependent reduction of L-glutamate 5-phosphate into L-glutamate 5-semialdehyde and phosphate. The product spontaneously undergoes cyclization to form 1-pyrroline-5-carboxylate.</text>
</comment>
<comment type="catalytic activity">
    <reaction evidence="1">
        <text>L-glutamate 5-semialdehyde + phosphate + NADP(+) = L-glutamyl 5-phosphate + NADPH + H(+)</text>
        <dbReference type="Rhea" id="RHEA:19541"/>
        <dbReference type="ChEBI" id="CHEBI:15378"/>
        <dbReference type="ChEBI" id="CHEBI:43474"/>
        <dbReference type="ChEBI" id="CHEBI:57783"/>
        <dbReference type="ChEBI" id="CHEBI:58066"/>
        <dbReference type="ChEBI" id="CHEBI:58274"/>
        <dbReference type="ChEBI" id="CHEBI:58349"/>
        <dbReference type="EC" id="1.2.1.41"/>
    </reaction>
</comment>
<comment type="pathway">
    <text evidence="1">Amino-acid biosynthesis; L-proline biosynthesis; L-glutamate 5-semialdehyde from L-glutamate: step 2/2.</text>
</comment>
<comment type="subcellular location">
    <subcellularLocation>
        <location evidence="1">Cytoplasm</location>
    </subcellularLocation>
</comment>
<comment type="similarity">
    <text evidence="1">Belongs to the gamma-glutamyl phosphate reductase family.</text>
</comment>
<evidence type="ECO:0000255" key="1">
    <source>
        <dbReference type="HAMAP-Rule" id="MF_00412"/>
    </source>
</evidence>
<protein>
    <recommendedName>
        <fullName evidence="1">Gamma-glutamyl phosphate reductase</fullName>
        <shortName evidence="1">GPR</shortName>
        <ecNumber evidence="1">1.2.1.41</ecNumber>
    </recommendedName>
    <alternativeName>
        <fullName evidence="1">Glutamate-5-semialdehyde dehydrogenase</fullName>
    </alternativeName>
    <alternativeName>
        <fullName evidence="1">Glutamyl-gamma-semialdehyde dehydrogenase</fullName>
        <shortName evidence="1">GSA dehydrogenase</shortName>
    </alternativeName>
</protein>
<gene>
    <name evidence="1" type="primary">proA</name>
    <name type="ordered locus">SYNW1486</name>
</gene>
<proteinExistence type="inferred from homology"/>
<accession>Q7U654</accession>
<organism>
    <name type="scientific">Parasynechococcus marenigrum (strain WH8102)</name>
    <dbReference type="NCBI Taxonomy" id="84588"/>
    <lineage>
        <taxon>Bacteria</taxon>
        <taxon>Bacillati</taxon>
        <taxon>Cyanobacteriota</taxon>
        <taxon>Cyanophyceae</taxon>
        <taxon>Synechococcales</taxon>
        <taxon>Prochlorococcaceae</taxon>
        <taxon>Parasynechococcus</taxon>
        <taxon>Parasynechococcus marenigrum</taxon>
    </lineage>
</organism>
<dbReference type="EC" id="1.2.1.41" evidence="1"/>
<dbReference type="EMBL" id="BX569693">
    <property type="protein sequence ID" value="CAE08001.1"/>
    <property type="molecule type" value="Genomic_DNA"/>
</dbReference>
<dbReference type="RefSeq" id="WP_011128350.1">
    <property type="nucleotide sequence ID" value="NC_005070.1"/>
</dbReference>
<dbReference type="SMR" id="Q7U654"/>
<dbReference type="STRING" id="84588.SYNW1486"/>
<dbReference type="KEGG" id="syw:SYNW1486"/>
<dbReference type="eggNOG" id="COG0014">
    <property type="taxonomic scope" value="Bacteria"/>
</dbReference>
<dbReference type="HOGENOM" id="CLU_030231_0_1_3"/>
<dbReference type="UniPathway" id="UPA00098">
    <property type="reaction ID" value="UER00360"/>
</dbReference>
<dbReference type="Proteomes" id="UP000001422">
    <property type="component" value="Chromosome"/>
</dbReference>
<dbReference type="GO" id="GO:0005737">
    <property type="term" value="C:cytoplasm"/>
    <property type="evidence" value="ECO:0007669"/>
    <property type="project" value="UniProtKB-SubCell"/>
</dbReference>
<dbReference type="GO" id="GO:0004350">
    <property type="term" value="F:glutamate-5-semialdehyde dehydrogenase activity"/>
    <property type="evidence" value="ECO:0007669"/>
    <property type="project" value="UniProtKB-UniRule"/>
</dbReference>
<dbReference type="GO" id="GO:0050661">
    <property type="term" value="F:NADP binding"/>
    <property type="evidence" value="ECO:0007669"/>
    <property type="project" value="InterPro"/>
</dbReference>
<dbReference type="GO" id="GO:0055129">
    <property type="term" value="P:L-proline biosynthetic process"/>
    <property type="evidence" value="ECO:0007669"/>
    <property type="project" value="UniProtKB-UniRule"/>
</dbReference>
<dbReference type="CDD" id="cd07079">
    <property type="entry name" value="ALDH_F18-19_ProA-GPR"/>
    <property type="match status" value="1"/>
</dbReference>
<dbReference type="FunFam" id="3.40.309.10:FF:000006">
    <property type="entry name" value="Gamma-glutamyl phosphate reductase"/>
    <property type="match status" value="1"/>
</dbReference>
<dbReference type="Gene3D" id="3.40.605.10">
    <property type="entry name" value="Aldehyde Dehydrogenase, Chain A, domain 1"/>
    <property type="match status" value="1"/>
</dbReference>
<dbReference type="Gene3D" id="3.40.309.10">
    <property type="entry name" value="Aldehyde Dehydrogenase, Chain A, domain 2"/>
    <property type="match status" value="1"/>
</dbReference>
<dbReference type="HAMAP" id="MF_00412">
    <property type="entry name" value="ProA"/>
    <property type="match status" value="1"/>
</dbReference>
<dbReference type="InterPro" id="IPR016161">
    <property type="entry name" value="Ald_DH/histidinol_DH"/>
</dbReference>
<dbReference type="InterPro" id="IPR016163">
    <property type="entry name" value="Ald_DH_C"/>
</dbReference>
<dbReference type="InterPro" id="IPR016162">
    <property type="entry name" value="Ald_DH_N"/>
</dbReference>
<dbReference type="InterPro" id="IPR015590">
    <property type="entry name" value="Aldehyde_DH_dom"/>
</dbReference>
<dbReference type="InterPro" id="IPR020593">
    <property type="entry name" value="G-glutamylP_reductase_CS"/>
</dbReference>
<dbReference type="InterPro" id="IPR012134">
    <property type="entry name" value="Glu-5-SA_DH"/>
</dbReference>
<dbReference type="InterPro" id="IPR000965">
    <property type="entry name" value="GPR_dom"/>
</dbReference>
<dbReference type="NCBIfam" id="NF001221">
    <property type="entry name" value="PRK00197.1"/>
    <property type="match status" value="1"/>
</dbReference>
<dbReference type="NCBIfam" id="TIGR00407">
    <property type="entry name" value="proA"/>
    <property type="match status" value="1"/>
</dbReference>
<dbReference type="PANTHER" id="PTHR11063:SF8">
    <property type="entry name" value="DELTA-1-PYRROLINE-5-CARBOXYLATE SYNTHASE"/>
    <property type="match status" value="1"/>
</dbReference>
<dbReference type="PANTHER" id="PTHR11063">
    <property type="entry name" value="GLUTAMATE SEMIALDEHYDE DEHYDROGENASE"/>
    <property type="match status" value="1"/>
</dbReference>
<dbReference type="Pfam" id="PF00171">
    <property type="entry name" value="Aldedh"/>
    <property type="match status" value="1"/>
</dbReference>
<dbReference type="PIRSF" id="PIRSF000151">
    <property type="entry name" value="GPR"/>
    <property type="match status" value="1"/>
</dbReference>
<dbReference type="SUPFAM" id="SSF53720">
    <property type="entry name" value="ALDH-like"/>
    <property type="match status" value="1"/>
</dbReference>
<dbReference type="PROSITE" id="PS01223">
    <property type="entry name" value="PROA"/>
    <property type="match status" value="1"/>
</dbReference>